<accession>P70714</accession>
<sequence>MPILTTHLLQDVIEIAQQAGEHLRCFYQRSVTVRMKEDNTPVTEADLFVSQFLTEKLTALTPQIPILSEENCHIPLTERQTWRSYWLIDPLDGTQQFINRTGQFSVLVSLVKDHQPVLGVIHAPMLGSTYYAMQGFGAYKHHDGQHLKLAFHDIQADNALRIAVGSAAAAEKVRSILNKNLAYEFHICGSSGLKSTLVADGVCDCYIRLGCTGEWDTAASEILLAEMGGIIFDLNYQPLTYNKRESFVNPNFVMGITQDFPWDKIFHSN</sequence>
<evidence type="ECO:0000255" key="1">
    <source>
        <dbReference type="HAMAP-Rule" id="MF_02095"/>
    </source>
</evidence>
<evidence type="ECO:0000305" key="2"/>
<reference key="1">
    <citation type="journal article" date="1997" name="Biochem. Biophys. Res. Commun.">
        <title>The gnd gene encoding a novel 6-phosphogluconate dehydrogenase and its adjacent region of Actinobacillus actinomycetemcomitans chromosomal DNA.</title>
        <authorList>
            <person name="Yoshida Y."/>
            <person name="Nakano Y."/>
            <person name="Yamashita Y."/>
            <person name="Koga T."/>
        </authorList>
    </citation>
    <scope>NUCLEOTIDE SEQUENCE [GENOMIC DNA]</scope>
    <source>
        <strain>ATCC 43718 / FDC Y4 / Serotype b</strain>
    </source>
</reference>
<protein>
    <recommendedName>
        <fullName evidence="1">3'(2'),5'-bisphosphate nucleotidase CysQ</fullName>
        <ecNumber evidence="1">3.1.3.7</ecNumber>
    </recommendedName>
    <alternativeName>
        <fullName evidence="1">3'(2'),5-bisphosphonucleoside 3'(2')-phosphohydrolase</fullName>
    </alternativeName>
    <alternativeName>
        <fullName evidence="1">3'-phosphoadenosine 5'-phosphate phosphatase</fullName>
        <shortName evidence="1">PAP phosphatase</shortName>
    </alternativeName>
</protein>
<keyword id="KW-0997">Cell inner membrane</keyword>
<keyword id="KW-1003">Cell membrane</keyword>
<keyword id="KW-0378">Hydrolase</keyword>
<keyword id="KW-0460">Magnesium</keyword>
<keyword id="KW-0472">Membrane</keyword>
<keyword id="KW-0479">Metal-binding</keyword>
<name>CYSQ_AGGAC</name>
<comment type="function">
    <text evidence="1">Converts adenosine-3',5'-bisphosphate (PAP) to AMP.</text>
</comment>
<comment type="catalytic activity">
    <reaction evidence="1">
        <text>adenosine 3',5'-bisphosphate + H2O = AMP + phosphate</text>
        <dbReference type="Rhea" id="RHEA:10040"/>
        <dbReference type="ChEBI" id="CHEBI:15377"/>
        <dbReference type="ChEBI" id="CHEBI:43474"/>
        <dbReference type="ChEBI" id="CHEBI:58343"/>
        <dbReference type="ChEBI" id="CHEBI:456215"/>
        <dbReference type="EC" id="3.1.3.7"/>
    </reaction>
</comment>
<comment type="cofactor">
    <cofactor evidence="1">
        <name>Mg(2+)</name>
        <dbReference type="ChEBI" id="CHEBI:18420"/>
    </cofactor>
</comment>
<comment type="subcellular location">
    <subcellularLocation>
        <location evidence="1">Cell inner membrane</location>
        <topology evidence="1">Peripheral membrane protein</topology>
        <orientation evidence="1">Cytoplasmic side</orientation>
    </subcellularLocation>
</comment>
<comment type="similarity">
    <text evidence="1 2">Belongs to the inositol monophosphatase superfamily. CysQ family.</text>
</comment>
<dbReference type="EC" id="3.1.3.7" evidence="1"/>
<dbReference type="EMBL" id="D88189">
    <property type="protein sequence ID" value="BAA13553.1"/>
    <property type="molecule type" value="Genomic_DNA"/>
</dbReference>
<dbReference type="RefSeq" id="WP_005545107.1">
    <property type="nucleotide sequence ID" value="NZ_VSEV01000005.1"/>
</dbReference>
<dbReference type="SMR" id="P70714"/>
<dbReference type="STRING" id="714.ACT75_04145"/>
<dbReference type="eggNOG" id="COG1218">
    <property type="taxonomic scope" value="Bacteria"/>
</dbReference>
<dbReference type="OMA" id="FAGGQSR"/>
<dbReference type="GO" id="GO:0005886">
    <property type="term" value="C:plasma membrane"/>
    <property type="evidence" value="ECO:0007669"/>
    <property type="project" value="UniProtKB-SubCell"/>
</dbReference>
<dbReference type="GO" id="GO:0008441">
    <property type="term" value="F:3'(2'),5'-bisphosphate nucleotidase activity"/>
    <property type="evidence" value="ECO:0007669"/>
    <property type="project" value="UniProtKB-UniRule"/>
</dbReference>
<dbReference type="GO" id="GO:0000287">
    <property type="term" value="F:magnesium ion binding"/>
    <property type="evidence" value="ECO:0007669"/>
    <property type="project" value="UniProtKB-UniRule"/>
</dbReference>
<dbReference type="GO" id="GO:0050427">
    <property type="term" value="P:3'-phosphoadenosine 5'-phosphosulfate metabolic process"/>
    <property type="evidence" value="ECO:0007669"/>
    <property type="project" value="TreeGrafter"/>
</dbReference>
<dbReference type="GO" id="GO:0046854">
    <property type="term" value="P:phosphatidylinositol phosphate biosynthetic process"/>
    <property type="evidence" value="ECO:0007669"/>
    <property type="project" value="InterPro"/>
</dbReference>
<dbReference type="GO" id="GO:0000103">
    <property type="term" value="P:sulfate assimilation"/>
    <property type="evidence" value="ECO:0007669"/>
    <property type="project" value="TreeGrafter"/>
</dbReference>
<dbReference type="CDD" id="cd01638">
    <property type="entry name" value="CysQ"/>
    <property type="match status" value="1"/>
</dbReference>
<dbReference type="Gene3D" id="3.40.190.80">
    <property type="match status" value="1"/>
</dbReference>
<dbReference type="Gene3D" id="3.30.540.10">
    <property type="entry name" value="Fructose-1,6-Bisphosphatase, subunit A, domain 1"/>
    <property type="match status" value="1"/>
</dbReference>
<dbReference type="HAMAP" id="MF_02095">
    <property type="entry name" value="CysQ"/>
    <property type="match status" value="1"/>
</dbReference>
<dbReference type="InterPro" id="IPR006240">
    <property type="entry name" value="CysQ"/>
</dbReference>
<dbReference type="InterPro" id="IPR050725">
    <property type="entry name" value="CysQ/Inositol_MonoPase"/>
</dbReference>
<dbReference type="InterPro" id="IPR020583">
    <property type="entry name" value="Inositol_monoP_metal-BS"/>
</dbReference>
<dbReference type="InterPro" id="IPR000760">
    <property type="entry name" value="Inositol_monophosphatase-like"/>
</dbReference>
<dbReference type="InterPro" id="IPR020550">
    <property type="entry name" value="Inositol_monophosphatase_CS"/>
</dbReference>
<dbReference type="NCBIfam" id="TIGR01331">
    <property type="entry name" value="bisphos_cysQ"/>
    <property type="match status" value="1"/>
</dbReference>
<dbReference type="PANTHER" id="PTHR43028">
    <property type="entry name" value="3'(2'),5'-BISPHOSPHATE NUCLEOTIDASE 1"/>
    <property type="match status" value="1"/>
</dbReference>
<dbReference type="PANTHER" id="PTHR43028:SF7">
    <property type="entry name" value="3'(2'),5'-BISPHOSPHATE NUCLEOTIDASE CYSQ"/>
    <property type="match status" value="1"/>
</dbReference>
<dbReference type="Pfam" id="PF00459">
    <property type="entry name" value="Inositol_P"/>
    <property type="match status" value="1"/>
</dbReference>
<dbReference type="SUPFAM" id="SSF56655">
    <property type="entry name" value="Carbohydrate phosphatase"/>
    <property type="match status" value="1"/>
</dbReference>
<dbReference type="PROSITE" id="PS00629">
    <property type="entry name" value="IMP_1"/>
    <property type="match status" value="1"/>
</dbReference>
<dbReference type="PROSITE" id="PS00630">
    <property type="entry name" value="IMP_2"/>
    <property type="match status" value="1"/>
</dbReference>
<organism>
    <name type="scientific">Aggregatibacter actinomycetemcomitans</name>
    <name type="common">Actinobacillus actinomycetemcomitans</name>
    <name type="synonym">Haemophilus actinomycetemcomitans</name>
    <dbReference type="NCBI Taxonomy" id="714"/>
    <lineage>
        <taxon>Bacteria</taxon>
        <taxon>Pseudomonadati</taxon>
        <taxon>Pseudomonadota</taxon>
        <taxon>Gammaproteobacteria</taxon>
        <taxon>Pasteurellales</taxon>
        <taxon>Pasteurellaceae</taxon>
        <taxon>Aggregatibacter</taxon>
    </lineage>
</organism>
<proteinExistence type="inferred from homology"/>
<gene>
    <name evidence="1" type="primary">cysQ</name>
</gene>
<feature type="chain" id="PRO_0000142547" description="3'(2'),5'-bisphosphate nucleotidase CysQ">
    <location>
        <begin position="1"/>
        <end position="269"/>
    </location>
</feature>
<feature type="binding site" evidence="1">
    <location>
        <position position="69"/>
    </location>
    <ligand>
        <name>Mg(2+)</name>
        <dbReference type="ChEBI" id="CHEBI:18420"/>
        <label>1</label>
    </ligand>
</feature>
<feature type="binding site" evidence="1">
    <location>
        <position position="69"/>
    </location>
    <ligand>
        <name>substrate</name>
    </ligand>
</feature>
<feature type="binding site" evidence="1">
    <location>
        <position position="89"/>
    </location>
    <ligand>
        <name>Mg(2+)</name>
        <dbReference type="ChEBI" id="CHEBI:18420"/>
        <label>1</label>
    </ligand>
</feature>
<feature type="binding site" evidence="1">
    <location>
        <position position="89"/>
    </location>
    <ligand>
        <name>Mg(2+)</name>
        <dbReference type="ChEBI" id="CHEBI:18420"/>
        <label>2</label>
    </ligand>
</feature>
<feature type="binding site" evidence="1">
    <location>
        <begin position="91"/>
        <end position="94"/>
    </location>
    <ligand>
        <name>substrate</name>
    </ligand>
</feature>
<feature type="binding site" evidence="1">
    <location>
        <position position="91"/>
    </location>
    <ligand>
        <name>Mg(2+)</name>
        <dbReference type="ChEBI" id="CHEBI:18420"/>
        <label>1</label>
    </ligand>
</feature>
<feature type="binding site" evidence="1">
    <location>
        <position position="92"/>
    </location>
    <ligand>
        <name>Mg(2+)</name>
        <dbReference type="ChEBI" id="CHEBI:18420"/>
        <label>2</label>
    </ligand>
</feature>
<feature type="binding site" evidence="1">
    <location>
        <position position="216"/>
    </location>
    <ligand>
        <name>Mg(2+)</name>
        <dbReference type="ChEBI" id="CHEBI:18420"/>
        <label>2</label>
    </ligand>
</feature>
<feature type="binding site" evidence="1">
    <location>
        <position position="216"/>
    </location>
    <ligand>
        <name>substrate</name>
    </ligand>
</feature>